<sequence length="376" mass="41663">MLDLIQTRRDLHQIPEIGLEEFKTQAYLLDVIEKLTTGKDFVQIRTWRTGILVYLQGSQPERTIGWRTDIDGLPIVEQTGLPFASQHQGRMHACGHDFHMTIALGCLERALEEQPKNNLLFLFQPAEENEAGGMLMYEDGAFGDWLPNQFYGLHVRPDLKVGQIATNTHTLFVGTCEVKIRFKGKGGHAAFPHEANDALVAASYFVTQVQSVVSRNVNPIEGAVVTFGVFQAGTTNNVITETAFLHGTIRALTQDMSLLVQKRVKTVAEGVAAAFDMEVEVELKQGGYLPVENNPALARELMDFFDEKDGIELIDIEPAMTGEDFGYLLSKVDGVMFWLGIDSPYALHHPQMSPKEEVLAIGVAAVSSFLKKKAAE</sequence>
<comment type="function">
    <text evidence="1">Catalyzes the conversion of N-acetyl-diaminopimelate to diaminopimelate and acetate.</text>
</comment>
<comment type="catalytic activity">
    <reaction evidence="1">
        <text>N-acetyl-(2S,6S)-2,6-diaminopimelate + H2O = (2S,6S)-2,6-diaminopimelate + acetate</text>
        <dbReference type="Rhea" id="RHEA:20405"/>
        <dbReference type="ChEBI" id="CHEBI:15377"/>
        <dbReference type="ChEBI" id="CHEBI:30089"/>
        <dbReference type="ChEBI" id="CHEBI:57609"/>
        <dbReference type="ChEBI" id="CHEBI:58767"/>
        <dbReference type="EC" id="3.5.1.47"/>
    </reaction>
</comment>
<comment type="pathway">
    <text evidence="1">Amino-acid biosynthesis; L-lysine biosynthesis via DAP pathway; LL-2,6-diaminopimelate from (S)-tetrahydrodipicolinate (acetylase route): step 3/3.</text>
</comment>
<comment type="similarity">
    <text evidence="1">Belongs to the peptidase M20A family. N-acetyldiaminopimelate deacetylase subfamily.</text>
</comment>
<name>DAPEL_STRZP</name>
<protein>
    <recommendedName>
        <fullName evidence="1">N-acetyldiaminopimelate deacetylase</fullName>
        <ecNumber evidence="1">3.5.1.47</ecNumber>
    </recommendedName>
</protein>
<evidence type="ECO:0000255" key="1">
    <source>
        <dbReference type="HAMAP-Rule" id="MF_01692"/>
    </source>
</evidence>
<feature type="chain" id="PRO_1000187462" description="N-acetyldiaminopimelate deacetylase">
    <location>
        <begin position="1"/>
        <end position="376"/>
    </location>
</feature>
<feature type="active site" evidence="1">
    <location>
        <position position="69"/>
    </location>
</feature>
<feature type="active site" description="Proton acceptor" evidence="1">
    <location>
        <position position="128"/>
    </location>
</feature>
<keyword id="KW-0028">Amino-acid biosynthesis</keyword>
<keyword id="KW-0220">Diaminopimelate biosynthesis</keyword>
<keyword id="KW-0378">Hydrolase</keyword>
<keyword id="KW-0457">Lysine biosynthesis</keyword>
<reference key="1">
    <citation type="journal article" date="2010" name="Genome Biol.">
        <title>Structure and dynamics of the pan-genome of Streptococcus pneumoniae and closely related species.</title>
        <authorList>
            <person name="Donati C."/>
            <person name="Hiller N.L."/>
            <person name="Tettelin H."/>
            <person name="Muzzi A."/>
            <person name="Croucher N.J."/>
            <person name="Angiuoli S.V."/>
            <person name="Oggioni M."/>
            <person name="Dunning Hotopp J.C."/>
            <person name="Hu F.Z."/>
            <person name="Riley D.R."/>
            <person name="Covacci A."/>
            <person name="Mitchell T.J."/>
            <person name="Bentley S.D."/>
            <person name="Kilian M."/>
            <person name="Ehrlich G.D."/>
            <person name="Rappuoli R."/>
            <person name="Moxon E.R."/>
            <person name="Masignani V."/>
        </authorList>
    </citation>
    <scope>NUCLEOTIDE SEQUENCE [LARGE SCALE GENOMIC DNA]</scope>
    <source>
        <strain>P1031</strain>
    </source>
</reference>
<dbReference type="EC" id="3.5.1.47" evidence="1"/>
<dbReference type="EMBL" id="CP000920">
    <property type="protein sequence ID" value="ACO21561.1"/>
    <property type="molecule type" value="Genomic_DNA"/>
</dbReference>
<dbReference type="RefSeq" id="WP_000886113.1">
    <property type="nucleotide sequence ID" value="NC_012467.1"/>
</dbReference>
<dbReference type="SMR" id="C1CN42"/>
<dbReference type="KEGG" id="spp:SPP_2151"/>
<dbReference type="HOGENOM" id="CLU_023257_0_1_9"/>
<dbReference type="UniPathway" id="UPA00034">
    <property type="reaction ID" value="UER00024"/>
</dbReference>
<dbReference type="GO" id="GO:0050118">
    <property type="term" value="F:N-acetyldiaminopimelate deacetylase activity"/>
    <property type="evidence" value="ECO:0007669"/>
    <property type="project" value="UniProtKB-UniRule"/>
</dbReference>
<dbReference type="GO" id="GO:0019877">
    <property type="term" value="P:diaminopimelate biosynthetic process"/>
    <property type="evidence" value="ECO:0007669"/>
    <property type="project" value="UniProtKB-UniRule"/>
</dbReference>
<dbReference type="GO" id="GO:0009089">
    <property type="term" value="P:lysine biosynthetic process via diaminopimelate"/>
    <property type="evidence" value="ECO:0007669"/>
    <property type="project" value="UniProtKB-UniRule"/>
</dbReference>
<dbReference type="CDD" id="cd05670">
    <property type="entry name" value="M20_Acy1_YkuR-like"/>
    <property type="match status" value="1"/>
</dbReference>
<dbReference type="FunFam" id="3.30.70.360:FF:000001">
    <property type="entry name" value="N-acetyldiaminopimelate deacetylase"/>
    <property type="match status" value="1"/>
</dbReference>
<dbReference type="Gene3D" id="3.30.70.360">
    <property type="match status" value="1"/>
</dbReference>
<dbReference type="Gene3D" id="3.40.630.10">
    <property type="entry name" value="Zn peptidases"/>
    <property type="match status" value="1"/>
</dbReference>
<dbReference type="HAMAP" id="MF_01692">
    <property type="entry name" value="DapEL"/>
    <property type="match status" value="1"/>
</dbReference>
<dbReference type="InterPro" id="IPR023905">
    <property type="entry name" value="AcetylDAP_deacetylase"/>
</dbReference>
<dbReference type="InterPro" id="IPR017439">
    <property type="entry name" value="Amidohydrolase"/>
</dbReference>
<dbReference type="InterPro" id="IPR036264">
    <property type="entry name" value="Bact_exopeptidase_dim_dom"/>
</dbReference>
<dbReference type="InterPro" id="IPR002933">
    <property type="entry name" value="Peptidase_M20"/>
</dbReference>
<dbReference type="InterPro" id="IPR011650">
    <property type="entry name" value="Peptidase_M20_dimer"/>
</dbReference>
<dbReference type="NCBIfam" id="TIGR01891">
    <property type="entry name" value="amidohydrolases"/>
    <property type="match status" value="1"/>
</dbReference>
<dbReference type="PANTHER" id="PTHR11014:SF98">
    <property type="entry name" value="N-ACETYLDIAMINOPIMELATE DEACETYLASE"/>
    <property type="match status" value="1"/>
</dbReference>
<dbReference type="PANTHER" id="PTHR11014">
    <property type="entry name" value="PEPTIDASE M20 FAMILY MEMBER"/>
    <property type="match status" value="1"/>
</dbReference>
<dbReference type="Pfam" id="PF07687">
    <property type="entry name" value="M20_dimer"/>
    <property type="match status" value="1"/>
</dbReference>
<dbReference type="Pfam" id="PF01546">
    <property type="entry name" value="Peptidase_M20"/>
    <property type="match status" value="1"/>
</dbReference>
<dbReference type="PIRSF" id="PIRSF005962">
    <property type="entry name" value="Pept_M20D_amidohydro"/>
    <property type="match status" value="1"/>
</dbReference>
<dbReference type="SUPFAM" id="SSF55031">
    <property type="entry name" value="Bacterial exopeptidase dimerisation domain"/>
    <property type="match status" value="1"/>
</dbReference>
<dbReference type="SUPFAM" id="SSF53187">
    <property type="entry name" value="Zn-dependent exopeptidases"/>
    <property type="match status" value="1"/>
</dbReference>
<organism>
    <name type="scientific">Streptococcus pneumoniae (strain P1031)</name>
    <dbReference type="NCBI Taxonomy" id="488223"/>
    <lineage>
        <taxon>Bacteria</taxon>
        <taxon>Bacillati</taxon>
        <taxon>Bacillota</taxon>
        <taxon>Bacilli</taxon>
        <taxon>Lactobacillales</taxon>
        <taxon>Streptococcaceae</taxon>
        <taxon>Streptococcus</taxon>
    </lineage>
</organism>
<proteinExistence type="inferred from homology"/>
<gene>
    <name type="ordered locus">SPP_2151</name>
</gene>
<accession>C1CN42</accession>